<protein>
    <recommendedName>
        <fullName evidence="1">Putative pterin-4-alpha-carbinolamine dehydratase</fullName>
        <shortName evidence="1">PHS</shortName>
        <ecNumber evidence="1">4.2.1.96</ecNumber>
    </recommendedName>
    <alternativeName>
        <fullName evidence="1">4-alpha-hydroxy-tetrahydropterin dehydratase</fullName>
    </alternativeName>
    <alternativeName>
        <fullName evidence="1">Pterin carbinolamine dehydratase</fullName>
        <shortName evidence="1">PCD</shortName>
    </alternativeName>
</protein>
<proteinExistence type="inferred from homology"/>
<feature type="chain" id="PRO_0000063105" description="Putative pterin-4-alpha-carbinolamine dehydratase">
    <location>
        <begin position="1"/>
        <end position="118"/>
    </location>
</feature>
<gene>
    <name type="primary">phhB</name>
    <name type="ordered locus">XAC2116</name>
</gene>
<evidence type="ECO:0000255" key="1">
    <source>
        <dbReference type="HAMAP-Rule" id="MF_00434"/>
    </source>
</evidence>
<sequence length="118" mass="13246">MTDLIPLEQAHCLPRKGSDHKLGEARLAELLPQVPGWELAEAGMALTRTFRFADYYRTLAFVNALAWIAHREDHHPDLGVHYDRVVVRYSTHDVGGLSENDFICAAKTAQLYDQGITA</sequence>
<organism>
    <name type="scientific">Xanthomonas axonopodis pv. citri (strain 306)</name>
    <dbReference type="NCBI Taxonomy" id="190486"/>
    <lineage>
        <taxon>Bacteria</taxon>
        <taxon>Pseudomonadati</taxon>
        <taxon>Pseudomonadota</taxon>
        <taxon>Gammaproteobacteria</taxon>
        <taxon>Lysobacterales</taxon>
        <taxon>Lysobacteraceae</taxon>
        <taxon>Xanthomonas</taxon>
    </lineage>
</organism>
<reference key="1">
    <citation type="journal article" date="2002" name="Nature">
        <title>Comparison of the genomes of two Xanthomonas pathogens with differing host specificities.</title>
        <authorList>
            <person name="da Silva A.C.R."/>
            <person name="Ferro J.A."/>
            <person name="Reinach F.C."/>
            <person name="Farah C.S."/>
            <person name="Furlan L.R."/>
            <person name="Quaggio R.B."/>
            <person name="Monteiro-Vitorello C.B."/>
            <person name="Van Sluys M.A."/>
            <person name="Almeida N.F. Jr."/>
            <person name="Alves L.M.C."/>
            <person name="do Amaral A.M."/>
            <person name="Bertolini M.C."/>
            <person name="Camargo L.E.A."/>
            <person name="Camarotte G."/>
            <person name="Cannavan F."/>
            <person name="Cardozo J."/>
            <person name="Chambergo F."/>
            <person name="Ciapina L.P."/>
            <person name="Cicarelli R.M.B."/>
            <person name="Coutinho L.L."/>
            <person name="Cursino-Santos J.R."/>
            <person name="El-Dorry H."/>
            <person name="Faria J.B."/>
            <person name="Ferreira A.J.S."/>
            <person name="Ferreira R.C.C."/>
            <person name="Ferro M.I.T."/>
            <person name="Formighieri E.F."/>
            <person name="Franco M.C."/>
            <person name="Greggio C.C."/>
            <person name="Gruber A."/>
            <person name="Katsuyama A.M."/>
            <person name="Kishi L.T."/>
            <person name="Leite R.P."/>
            <person name="Lemos E.G.M."/>
            <person name="Lemos M.V.F."/>
            <person name="Locali E.C."/>
            <person name="Machado M.A."/>
            <person name="Madeira A.M.B.N."/>
            <person name="Martinez-Rossi N.M."/>
            <person name="Martins E.C."/>
            <person name="Meidanis J."/>
            <person name="Menck C.F.M."/>
            <person name="Miyaki C.Y."/>
            <person name="Moon D.H."/>
            <person name="Moreira L.M."/>
            <person name="Novo M.T.M."/>
            <person name="Okura V.K."/>
            <person name="Oliveira M.C."/>
            <person name="Oliveira V.R."/>
            <person name="Pereira H.A."/>
            <person name="Rossi A."/>
            <person name="Sena J.A.D."/>
            <person name="Silva C."/>
            <person name="de Souza R.F."/>
            <person name="Spinola L.A.F."/>
            <person name="Takita M.A."/>
            <person name="Tamura R.E."/>
            <person name="Teixeira E.C."/>
            <person name="Tezza R.I.D."/>
            <person name="Trindade dos Santos M."/>
            <person name="Truffi D."/>
            <person name="Tsai S.M."/>
            <person name="White F.F."/>
            <person name="Setubal J.C."/>
            <person name="Kitajima J.P."/>
        </authorList>
    </citation>
    <scope>NUCLEOTIDE SEQUENCE [LARGE SCALE GENOMIC DNA]</scope>
    <source>
        <strain>306</strain>
    </source>
</reference>
<comment type="catalytic activity">
    <reaction evidence="1">
        <text>(4aS,6R)-4a-hydroxy-L-erythro-5,6,7,8-tetrahydrobiopterin = (6R)-L-erythro-6,7-dihydrobiopterin + H2O</text>
        <dbReference type="Rhea" id="RHEA:11920"/>
        <dbReference type="ChEBI" id="CHEBI:15377"/>
        <dbReference type="ChEBI" id="CHEBI:15642"/>
        <dbReference type="ChEBI" id="CHEBI:43120"/>
        <dbReference type="EC" id="4.2.1.96"/>
    </reaction>
</comment>
<comment type="similarity">
    <text evidence="1">Belongs to the pterin-4-alpha-carbinolamine dehydratase family.</text>
</comment>
<dbReference type="EC" id="4.2.1.96" evidence="1"/>
<dbReference type="EMBL" id="AE008923">
    <property type="protein sequence ID" value="AAM36969.1"/>
    <property type="molecule type" value="Genomic_DNA"/>
</dbReference>
<dbReference type="RefSeq" id="WP_003489213.1">
    <property type="nucleotide sequence ID" value="NC_003919.1"/>
</dbReference>
<dbReference type="SMR" id="Q8PKQ3"/>
<dbReference type="KEGG" id="xac:XAC2116"/>
<dbReference type="eggNOG" id="COG2154">
    <property type="taxonomic scope" value="Bacteria"/>
</dbReference>
<dbReference type="HOGENOM" id="CLU_081974_2_1_6"/>
<dbReference type="Proteomes" id="UP000000576">
    <property type="component" value="Chromosome"/>
</dbReference>
<dbReference type="GO" id="GO:0008124">
    <property type="term" value="F:4-alpha-hydroxytetrahydrobiopterin dehydratase activity"/>
    <property type="evidence" value="ECO:0007669"/>
    <property type="project" value="UniProtKB-UniRule"/>
</dbReference>
<dbReference type="GO" id="GO:0006729">
    <property type="term" value="P:tetrahydrobiopterin biosynthetic process"/>
    <property type="evidence" value="ECO:0007669"/>
    <property type="project" value="InterPro"/>
</dbReference>
<dbReference type="CDD" id="cd00913">
    <property type="entry name" value="PCD_DCoH_subfamily_a"/>
    <property type="match status" value="1"/>
</dbReference>
<dbReference type="Gene3D" id="3.30.1360.20">
    <property type="entry name" value="Transcriptional coactivator/pterin dehydratase"/>
    <property type="match status" value="1"/>
</dbReference>
<dbReference type="HAMAP" id="MF_00434">
    <property type="entry name" value="Pterin_4_alpha"/>
    <property type="match status" value="1"/>
</dbReference>
<dbReference type="InterPro" id="IPR036428">
    <property type="entry name" value="PCD_sf"/>
</dbReference>
<dbReference type="InterPro" id="IPR001533">
    <property type="entry name" value="Pterin_deHydtase"/>
</dbReference>
<dbReference type="NCBIfam" id="NF002019">
    <property type="entry name" value="PRK00823.1-4"/>
    <property type="match status" value="1"/>
</dbReference>
<dbReference type="PANTHER" id="PTHR12599">
    <property type="entry name" value="PTERIN-4-ALPHA-CARBINOLAMINE DEHYDRATASE"/>
    <property type="match status" value="1"/>
</dbReference>
<dbReference type="PANTHER" id="PTHR12599:SF0">
    <property type="entry name" value="PTERIN-4-ALPHA-CARBINOLAMINE DEHYDRATASE"/>
    <property type="match status" value="1"/>
</dbReference>
<dbReference type="Pfam" id="PF01329">
    <property type="entry name" value="Pterin_4a"/>
    <property type="match status" value="1"/>
</dbReference>
<dbReference type="SUPFAM" id="SSF55248">
    <property type="entry name" value="PCD-like"/>
    <property type="match status" value="1"/>
</dbReference>
<keyword id="KW-0456">Lyase</keyword>
<accession>Q8PKQ3</accession>
<name>PHS_XANAC</name>